<dbReference type="EMBL" id="CU468135">
    <property type="protein sequence ID" value="CAO97878.1"/>
    <property type="molecule type" value="Genomic_DNA"/>
</dbReference>
<dbReference type="RefSeq" id="WP_012442535.1">
    <property type="nucleotide sequence ID" value="NC_010694.1"/>
</dbReference>
<dbReference type="SMR" id="B2VF12"/>
<dbReference type="STRING" id="465817.ETA_28320"/>
<dbReference type="KEGG" id="eta:ETA_28320"/>
<dbReference type="eggNOG" id="COG1678">
    <property type="taxonomic scope" value="Bacteria"/>
</dbReference>
<dbReference type="HOGENOM" id="CLU_057596_1_0_6"/>
<dbReference type="OrthoDB" id="9807486at2"/>
<dbReference type="Proteomes" id="UP000001726">
    <property type="component" value="Chromosome"/>
</dbReference>
<dbReference type="GO" id="GO:0005829">
    <property type="term" value="C:cytosol"/>
    <property type="evidence" value="ECO:0007669"/>
    <property type="project" value="TreeGrafter"/>
</dbReference>
<dbReference type="Gene3D" id="3.40.1740.10">
    <property type="entry name" value="VC0467-like"/>
    <property type="match status" value="1"/>
</dbReference>
<dbReference type="HAMAP" id="MF_00758">
    <property type="entry name" value="UPF0301"/>
    <property type="match status" value="1"/>
</dbReference>
<dbReference type="InterPro" id="IPR003774">
    <property type="entry name" value="AlgH-like"/>
</dbReference>
<dbReference type="NCBIfam" id="NF001266">
    <property type="entry name" value="PRK00228.1-1"/>
    <property type="match status" value="1"/>
</dbReference>
<dbReference type="PANTHER" id="PTHR30327">
    <property type="entry name" value="UNCHARACTERIZED PROTEIN YQGE"/>
    <property type="match status" value="1"/>
</dbReference>
<dbReference type="PANTHER" id="PTHR30327:SF1">
    <property type="entry name" value="UPF0301 PROTEIN YQGE"/>
    <property type="match status" value="1"/>
</dbReference>
<dbReference type="Pfam" id="PF02622">
    <property type="entry name" value="DUF179"/>
    <property type="match status" value="1"/>
</dbReference>
<dbReference type="SUPFAM" id="SSF143456">
    <property type="entry name" value="VC0467-like"/>
    <property type="match status" value="1"/>
</dbReference>
<keyword id="KW-1185">Reference proteome</keyword>
<comment type="similarity">
    <text evidence="1">Belongs to the UPF0301 (AlgH) family.</text>
</comment>
<reference key="1">
    <citation type="journal article" date="2008" name="Environ. Microbiol.">
        <title>The genome of Erwinia tasmaniensis strain Et1/99, a non-pathogenic bacterium in the genus Erwinia.</title>
        <authorList>
            <person name="Kube M."/>
            <person name="Migdoll A.M."/>
            <person name="Mueller I."/>
            <person name="Kuhl H."/>
            <person name="Beck A."/>
            <person name="Reinhardt R."/>
            <person name="Geider K."/>
        </authorList>
    </citation>
    <scope>NUCLEOTIDE SEQUENCE [LARGE SCALE GENOMIC DNA]</scope>
    <source>
        <strain>DSM 17950 / CFBP 7177 / CIP 109463 / NCPPB 4357 / Et1/99</strain>
    </source>
</reference>
<sequence>MNLQHHFLIAMPTLQDPLFKRSVVYICEHNADGAMGLIVNKPMENLTVEGILKKLKIAPTAREPDIRLDKPVFSGGPLAEDRGFILHSAQKTFTSSIRVSDNTVITTSRDVLETLGTAEQPDNVLVALGYCAWEKDQLEQELLENAWLTSPANSNILFHTPIAERWREAAKSIGVDIHNIASEAGHA</sequence>
<proteinExistence type="inferred from homology"/>
<feature type="chain" id="PRO_1000198267" description="UPF0301 protein ETA_28320">
    <location>
        <begin position="1"/>
        <end position="187"/>
    </location>
</feature>
<name>Y2832_ERWT9</name>
<protein>
    <recommendedName>
        <fullName evidence="1">UPF0301 protein ETA_28320</fullName>
    </recommendedName>
</protein>
<accession>B2VF12</accession>
<gene>
    <name type="ordered locus">ETA_28320</name>
</gene>
<organism>
    <name type="scientific">Erwinia tasmaniensis (strain DSM 17950 / CFBP 7177 / CIP 109463 / NCPPB 4357 / Et1/99)</name>
    <dbReference type="NCBI Taxonomy" id="465817"/>
    <lineage>
        <taxon>Bacteria</taxon>
        <taxon>Pseudomonadati</taxon>
        <taxon>Pseudomonadota</taxon>
        <taxon>Gammaproteobacteria</taxon>
        <taxon>Enterobacterales</taxon>
        <taxon>Erwiniaceae</taxon>
        <taxon>Erwinia</taxon>
    </lineage>
</organism>
<evidence type="ECO:0000255" key="1">
    <source>
        <dbReference type="HAMAP-Rule" id="MF_00758"/>
    </source>
</evidence>